<evidence type="ECO:0000250" key="1"/>
<evidence type="ECO:0000250" key="2">
    <source>
        <dbReference type="UniProtKB" id="Q8NBP7"/>
    </source>
</evidence>
<evidence type="ECO:0000255" key="3"/>
<evidence type="ECO:0000255" key="4">
    <source>
        <dbReference type="PROSITE-ProRule" id="PRU01240"/>
    </source>
</evidence>
<evidence type="ECO:0000305" key="5"/>
<name>PCSK9_PLEMO</name>
<dbReference type="EC" id="3.4.21.-"/>
<dbReference type="EMBL" id="EF692504">
    <property type="protein sequence ID" value="ABV59224.1"/>
    <property type="molecule type" value="mRNA"/>
</dbReference>
<dbReference type="SMR" id="A8T677"/>
<dbReference type="GlyCosmos" id="A8T677">
    <property type="glycosylation" value="1 site, No reported glycans"/>
</dbReference>
<dbReference type="GO" id="GO:0009986">
    <property type="term" value="C:cell surface"/>
    <property type="evidence" value="ECO:0000250"/>
    <property type="project" value="UniProtKB"/>
</dbReference>
<dbReference type="GO" id="GO:0005737">
    <property type="term" value="C:cytoplasm"/>
    <property type="evidence" value="ECO:0000250"/>
    <property type="project" value="UniProtKB"/>
</dbReference>
<dbReference type="GO" id="GO:0005769">
    <property type="term" value="C:early endosome"/>
    <property type="evidence" value="ECO:0000250"/>
    <property type="project" value="UniProtKB"/>
</dbReference>
<dbReference type="GO" id="GO:0005783">
    <property type="term" value="C:endoplasmic reticulum"/>
    <property type="evidence" value="ECO:0000250"/>
    <property type="project" value="UniProtKB"/>
</dbReference>
<dbReference type="GO" id="GO:0005615">
    <property type="term" value="C:extracellular space"/>
    <property type="evidence" value="ECO:0007669"/>
    <property type="project" value="TreeGrafter"/>
</dbReference>
<dbReference type="GO" id="GO:0005794">
    <property type="term" value="C:Golgi apparatus"/>
    <property type="evidence" value="ECO:0000250"/>
    <property type="project" value="UniProtKB"/>
</dbReference>
<dbReference type="GO" id="GO:0005770">
    <property type="term" value="C:late endosome"/>
    <property type="evidence" value="ECO:0000250"/>
    <property type="project" value="UniProtKB"/>
</dbReference>
<dbReference type="GO" id="GO:0005764">
    <property type="term" value="C:lysosome"/>
    <property type="evidence" value="ECO:0000250"/>
    <property type="project" value="UniProtKB"/>
</dbReference>
<dbReference type="GO" id="GO:0034185">
    <property type="term" value="F:apolipoprotein binding"/>
    <property type="evidence" value="ECO:0000250"/>
    <property type="project" value="UniProtKB"/>
</dbReference>
<dbReference type="GO" id="GO:0030169">
    <property type="term" value="F:low-density lipoprotein particle binding"/>
    <property type="evidence" value="ECO:0000250"/>
    <property type="project" value="UniProtKB"/>
</dbReference>
<dbReference type="GO" id="GO:0004252">
    <property type="term" value="F:serine-type endopeptidase activity"/>
    <property type="evidence" value="ECO:0007669"/>
    <property type="project" value="InterPro"/>
</dbReference>
<dbReference type="GO" id="GO:0034189">
    <property type="term" value="F:very-low-density lipoprotein particle binding"/>
    <property type="evidence" value="ECO:0000250"/>
    <property type="project" value="UniProtKB"/>
</dbReference>
<dbReference type="GO" id="GO:0006915">
    <property type="term" value="P:apoptotic process"/>
    <property type="evidence" value="ECO:0007669"/>
    <property type="project" value="UniProtKB-KW"/>
</dbReference>
<dbReference type="GO" id="GO:0008203">
    <property type="term" value="P:cholesterol metabolic process"/>
    <property type="evidence" value="ECO:0007669"/>
    <property type="project" value="UniProtKB-KW"/>
</dbReference>
<dbReference type="GO" id="GO:0032802">
    <property type="term" value="P:low-density lipoprotein particle receptor catabolic process"/>
    <property type="evidence" value="ECO:0000250"/>
    <property type="project" value="UniProtKB"/>
</dbReference>
<dbReference type="GO" id="GO:0006508">
    <property type="term" value="P:proteolysis"/>
    <property type="evidence" value="ECO:0007669"/>
    <property type="project" value="UniProtKB-KW"/>
</dbReference>
<dbReference type="GO" id="GO:0043523">
    <property type="term" value="P:regulation of neuron apoptotic process"/>
    <property type="evidence" value="ECO:0000250"/>
    <property type="project" value="UniProtKB"/>
</dbReference>
<dbReference type="CDD" id="cd16839">
    <property type="entry name" value="PCSK9_C-CRD"/>
    <property type="match status" value="1"/>
</dbReference>
<dbReference type="CDD" id="cd04077">
    <property type="entry name" value="Peptidases_S8_PCSK9_ProteinaseK_like"/>
    <property type="match status" value="1"/>
</dbReference>
<dbReference type="FunFam" id="2.60.120.690:FF:000001">
    <property type="entry name" value="Proprotein convertase subtilisin/kexin type 9"/>
    <property type="match status" value="1"/>
</dbReference>
<dbReference type="FunFam" id="3.30.70.80:FF:000004">
    <property type="entry name" value="Proprotein convertase subtilisin/kexin type 9"/>
    <property type="match status" value="1"/>
</dbReference>
<dbReference type="FunFam" id="3.40.50.200:FF:000016">
    <property type="entry name" value="Proprotein convertase subtilisin/kexin type 9"/>
    <property type="match status" value="1"/>
</dbReference>
<dbReference type="Gene3D" id="3.30.70.80">
    <property type="entry name" value="Peptidase S8 propeptide/proteinase inhibitor I9"/>
    <property type="match status" value="1"/>
</dbReference>
<dbReference type="Gene3D" id="3.40.50.200">
    <property type="entry name" value="Peptidase S8/S53 domain"/>
    <property type="match status" value="1"/>
</dbReference>
<dbReference type="Gene3D" id="2.60.120.690">
    <property type="entry name" value="Proprotein convertase subtilisin/kexin type 9"/>
    <property type="match status" value="1"/>
</dbReference>
<dbReference type="InterPro" id="IPR041254">
    <property type="entry name" value="PCSK9_C1"/>
</dbReference>
<dbReference type="InterPro" id="IPR041052">
    <property type="entry name" value="PCSK9_C2"/>
</dbReference>
<dbReference type="InterPro" id="IPR041051">
    <property type="entry name" value="PCSK9_C3"/>
</dbReference>
<dbReference type="InterPro" id="IPR034193">
    <property type="entry name" value="PCSK9_ProteinaseK-like"/>
</dbReference>
<dbReference type="InterPro" id="IPR000209">
    <property type="entry name" value="Peptidase_S8/S53_dom"/>
</dbReference>
<dbReference type="InterPro" id="IPR036852">
    <property type="entry name" value="Peptidase_S8/S53_dom_sf"/>
</dbReference>
<dbReference type="InterPro" id="IPR050131">
    <property type="entry name" value="Peptidase_S8_subtilisin-like"/>
</dbReference>
<dbReference type="InterPro" id="IPR015500">
    <property type="entry name" value="Peptidase_S8_subtilisin-rel"/>
</dbReference>
<dbReference type="InterPro" id="IPR010259">
    <property type="entry name" value="S8pro/Inhibitor_I9"/>
</dbReference>
<dbReference type="InterPro" id="IPR037045">
    <property type="entry name" value="S8pro/Inhibitor_I9_sf"/>
</dbReference>
<dbReference type="PANTHER" id="PTHR43806">
    <property type="entry name" value="PEPTIDASE S8"/>
    <property type="match status" value="1"/>
</dbReference>
<dbReference type="PANTHER" id="PTHR43806:SF60">
    <property type="entry name" value="PROPROTEIN CONVERTASE SUBTILISIN_KEXIN TYPE 9"/>
    <property type="match status" value="1"/>
</dbReference>
<dbReference type="Pfam" id="PF05922">
    <property type="entry name" value="Inhibitor_I9"/>
    <property type="match status" value="1"/>
</dbReference>
<dbReference type="Pfam" id="PF18459">
    <property type="entry name" value="PCSK9_C1"/>
    <property type="match status" value="1"/>
</dbReference>
<dbReference type="Pfam" id="PF18464">
    <property type="entry name" value="PCSK9_C2"/>
    <property type="match status" value="1"/>
</dbReference>
<dbReference type="Pfam" id="PF18463">
    <property type="entry name" value="PCSK9_C3"/>
    <property type="match status" value="1"/>
</dbReference>
<dbReference type="Pfam" id="PF00082">
    <property type="entry name" value="Peptidase_S8"/>
    <property type="match status" value="1"/>
</dbReference>
<dbReference type="PRINTS" id="PR00723">
    <property type="entry name" value="SUBTILISIN"/>
</dbReference>
<dbReference type="SUPFAM" id="SSF54897">
    <property type="entry name" value="Protease propeptides/inhibitors"/>
    <property type="match status" value="1"/>
</dbReference>
<dbReference type="SUPFAM" id="SSF52743">
    <property type="entry name" value="Subtilisin-like"/>
    <property type="match status" value="1"/>
</dbReference>
<dbReference type="PROSITE" id="PS51892">
    <property type="entry name" value="SUBTILASE"/>
    <property type="match status" value="1"/>
</dbReference>
<organism>
    <name type="scientific">Plecturocebus moloch</name>
    <name type="common">Dusky titi monkey</name>
    <name type="synonym">Callicebus moloch</name>
    <dbReference type="NCBI Taxonomy" id="9523"/>
    <lineage>
        <taxon>Eukaryota</taxon>
        <taxon>Metazoa</taxon>
        <taxon>Chordata</taxon>
        <taxon>Craniata</taxon>
        <taxon>Vertebrata</taxon>
        <taxon>Euteleostomi</taxon>
        <taxon>Mammalia</taxon>
        <taxon>Eutheria</taxon>
        <taxon>Euarchontoglires</taxon>
        <taxon>Primates</taxon>
        <taxon>Haplorrhini</taxon>
        <taxon>Platyrrhini</taxon>
        <taxon>Pitheciidae</taxon>
        <taxon>Callicebinae</taxon>
        <taxon>Plecturocebus</taxon>
    </lineage>
</organism>
<comment type="function">
    <text evidence="1">Crucial player in the regulation of plasma cholesterol homeostasis. Binds to low-density lipid receptor family members: low density lipoprotein receptor (LDLR), very low density lipoprotein receptor (VLDLR), apolipoprotein E receptor (LRP1/APOER) and apolipoprotein receptor 2 (LRP8/APOER2), and promotes their degradation in intracellular acidic compartments. Acts via a non-proteolytic mechanism to enhance the degradation of the hepatic LDLR through a clathrin LDLRAP1/ARH-mediated pathway. May prevent the recycling of LDLR from endosomes to the cell surface or direct it to lysosomes for degradation. Can induce ubiquitination of LDLR leading to its subsequent degradation. Inhibits intracellular degradation of APOB via the autophagosome/lysosome pathway in a LDLR-independent manner. Involved in the disposal of non-acetylated intermediates of BACE1 in the early secretory pathway. Inhibits epithelial Na(+) channel (ENaC)-mediated Na(+) absorption by reducing ENaC surface expression primarily by increasing its proteasomal degradation. Regulates neuronal apoptosis via modulation of LRP8/APOER2 levels and related anti-apoptotic signaling pathways (By similarity).</text>
</comment>
<comment type="cofactor">
    <cofactor evidence="1">
        <name>Ca(2+)</name>
        <dbReference type="ChEBI" id="CHEBI:29108"/>
    </cofactor>
</comment>
<comment type="activity regulation">
    <text evidence="1">Its proteolytic activity is autoinhibited by the non-covalent binding of the propeptide to the catalytic domain. Inhibited by EGTA (By similarity).</text>
</comment>
<comment type="subunit">
    <text evidence="2">Monomer. Can self-associate to form dimers and higher multimers which may have increased LDLR degrading activity. The precursor protein but not the mature protein may form multimers. Interacts with APOB, VLDLR, LRP8/APOER2 and BACE1. The full-length immature form (pro-PCSK9) interacts with SCNN1A, SCNN1B and SCNN1G. The pro-PCSK9 form (via C-terminal domain) interacts with LDLR. Interacts (via the C-terminal domain) with ANXA2 (via repeat Annexin 1); the interaction inhibits the degradation of LDLR.</text>
</comment>
<comment type="subcellular location">
    <subcellularLocation>
        <location evidence="1">Cytoplasm</location>
    </subcellularLocation>
    <subcellularLocation>
        <location evidence="1">Secreted</location>
    </subcellularLocation>
    <subcellularLocation>
        <location evidence="1">Endosome</location>
    </subcellularLocation>
    <subcellularLocation>
        <location evidence="1">Lysosome</location>
    </subcellularLocation>
    <subcellularLocation>
        <location evidence="1">Cell surface</location>
    </subcellularLocation>
    <subcellularLocation>
        <location evidence="1">Endoplasmic reticulum</location>
    </subcellularLocation>
    <subcellularLocation>
        <location evidence="1">Golgi apparatus</location>
    </subcellularLocation>
    <text evidence="1">Autocatalytic cleavage is required to transport it from the endoplasmic reticulum to the Golgi apparatus and for the secretion of the mature protein. Localizes to the endoplasmic reticulum in the absence of LDLR and colocalizes to the cell surface and to the endosomes/lysosomes in the presence of LDLR. The sorting to the cell surface and endosomes is required in order to fully promote LDLR degradation (By similarity).</text>
</comment>
<comment type="domain">
    <text evidence="1">The C-terminal domain (CRD) is essential for the LDLR-binding and degrading activities.</text>
</comment>
<comment type="domain">
    <text evidence="1">The catalytic domain is responsible for mediating its self-association.</text>
</comment>
<comment type="PTM">
    <text evidence="1">Cleavage by furin and PCSK5 generates a truncated inactive protein that is unable to induce LDLR degradation.</text>
</comment>
<comment type="PTM">
    <text evidence="1">Undergoes autocatalytic cleavage in the endoplasmic reticulum to release the propeptide from the N-terminus and the cleavage of the propeptide is strictly required for its maturation and activation. The cleaved propeptide however remains associated with the catalytic domain through non-covalent interactions, preventing potential substrates from accessing its active site. As a result, it is secreted from cells as a propeptide-containing, enzymatically inactive protein (By similarity).</text>
</comment>
<comment type="PTM">
    <text evidence="1">Phosphorylation protects the propeptide against proteolysis.</text>
</comment>
<comment type="similarity">
    <text evidence="5">Belongs to the peptidase S8 family.</text>
</comment>
<proteinExistence type="evidence at transcript level"/>
<keyword id="KW-0053">Apoptosis</keyword>
<keyword id="KW-0068">Autocatalytic cleavage</keyword>
<keyword id="KW-0106">Calcium</keyword>
<keyword id="KW-0153">Cholesterol metabolism</keyword>
<keyword id="KW-0963">Cytoplasm</keyword>
<keyword id="KW-1015">Disulfide bond</keyword>
<keyword id="KW-0256">Endoplasmic reticulum</keyword>
<keyword id="KW-0967">Endosome</keyword>
<keyword id="KW-0325">Glycoprotein</keyword>
<keyword id="KW-0333">Golgi apparatus</keyword>
<keyword id="KW-0378">Hydrolase</keyword>
<keyword id="KW-0443">Lipid metabolism</keyword>
<keyword id="KW-0458">Lysosome</keyword>
<keyword id="KW-0597">Phosphoprotein</keyword>
<keyword id="KW-0645">Protease</keyword>
<keyword id="KW-0964">Secreted</keyword>
<keyword id="KW-0720">Serine protease</keyword>
<keyword id="KW-0732">Signal</keyword>
<keyword id="KW-0753">Steroid metabolism</keyword>
<keyword id="KW-1207">Sterol metabolism</keyword>
<keyword id="KW-0765">Sulfation</keyword>
<keyword id="KW-0865">Zymogen</keyword>
<protein>
    <recommendedName>
        <fullName>Proprotein convertase subtilisin/kexin type 9</fullName>
        <ecNumber>3.4.21.-</ecNumber>
    </recommendedName>
    <alternativeName>
        <fullName>Proprotein convertase 9</fullName>
        <shortName>PC9</shortName>
    </alternativeName>
    <alternativeName>
        <fullName>Subtilisin/kexin-like protease PC9</fullName>
    </alternativeName>
</protein>
<sequence length="684" mass="73231">MGTVSSRRLWWPLPLLLLLLLGPPGARAQEDDDGDYEELVLALRSEEDGPADALQHGATATFHRCAKDPWRLPGTYVVVLKDSDAHRSQPERTARRLQAQAARRGYLIKLLHVFHHLLPGFLVKMSRDLLELALRLPHVDYIEEDSSVFAQSIPWNLERITPARYRADEYQPPNGGSLVEVYLLDTSIQSSHREIEGRVMVTDFESVPEEDGTRFHRQASKCDSHGTHLAGVVSGRDAGVAKGASLRSLHVLNCQGKGTVSSALIGLEFIRKSQLVQPVGPLVVLLPLAGGYSRVLNAACRRLAGAGVVLVAAAGNFRDDACLYSPASAPEVITVGATNAQDQPLTLGTLGTNFGRCVDLFAPGEDIIGASSDCSTCFVSRSGTSQAAAHVAGIAAMMLSAEPELTLAELRQRLIHFSAKDVINEAWFPEDQRVLTPNLVATLPPSTHGAGWQLFCRTVWSAHSGPTRMATAMARCAPDEELLSCSSFSRSGKRRGERIEAQGGRRVCLAPNAFGGEGVYAVARCCLLPQANCSVHTAPPAGAGMGTRAHCHQQGHVLTGCSSHWEMKDLGTHKPPVLKPRGQPDQCMGHSGASTHASCCYAPGLECKVKEHGLPAPQEQVTVACEEGWTLTGCSALPGTSHVLGAYAVDDTCVVRSRDVSTTGSTSEEAVAAVAICCRSRHLA</sequence>
<feature type="signal peptide" evidence="1">
    <location>
        <begin position="1"/>
        <end position="28"/>
    </location>
</feature>
<feature type="propeptide" id="PRO_0000318276" evidence="1">
    <location>
        <begin position="29"/>
        <end position="151"/>
    </location>
</feature>
<feature type="chain" id="PRO_0000318277" description="Proprotein convertase subtilisin/kexin type 9">
    <location>
        <begin position="152"/>
        <end position="684"/>
    </location>
</feature>
<feature type="domain" description="Inhibitor I9" evidence="3">
    <location>
        <begin position="75"/>
        <end position="148"/>
    </location>
</feature>
<feature type="domain" description="Peptidase S8" evidence="4">
    <location>
        <begin position="154"/>
        <end position="460"/>
    </location>
</feature>
<feature type="region of interest" description="C-terminal domain" evidence="1">
    <location>
        <begin position="451"/>
        <end position="684"/>
    </location>
</feature>
<feature type="active site" description="Charge relay system" evidence="4">
    <location>
        <position position="185"/>
    </location>
</feature>
<feature type="active site" description="Charge relay system" evidence="4">
    <location>
        <position position="225"/>
    </location>
</feature>
<feature type="active site" description="Charge relay system" evidence="4">
    <location>
        <position position="385"/>
    </location>
</feature>
<feature type="site" description="Cleavage; by autolysis" evidence="1">
    <location>
        <begin position="151"/>
        <end position="152"/>
    </location>
</feature>
<feature type="site" description="Cleavage; by furin and PCSK5" evidence="1">
    <location>
        <begin position="217"/>
        <end position="218"/>
    </location>
</feature>
<feature type="modified residue" description="Sulfotyrosine" evidence="1">
    <location>
        <position position="36"/>
    </location>
</feature>
<feature type="modified residue" description="Phosphoserine" evidence="2">
    <location>
        <position position="45"/>
    </location>
</feature>
<feature type="glycosylation site" description="N-linked (GlcNAc...) asparagine" evidence="3">
    <location>
        <position position="532"/>
    </location>
</feature>
<feature type="disulfide bond" evidence="3">
    <location>
        <begin position="222"/>
        <end position="254"/>
    </location>
</feature>
<feature type="disulfide bond" evidence="3">
    <location>
        <begin position="322"/>
        <end position="357"/>
    </location>
</feature>
<feature type="disulfide bond" evidence="3">
    <location>
        <begin position="456"/>
        <end position="526"/>
    </location>
</feature>
<feature type="disulfide bond" evidence="3">
    <location>
        <begin position="476"/>
        <end position="525"/>
    </location>
</feature>
<feature type="disulfide bond" evidence="3">
    <location>
        <begin position="485"/>
        <end position="508"/>
    </location>
</feature>
<feature type="disulfide bond" evidence="3">
    <location>
        <begin position="533"/>
        <end position="600"/>
    </location>
</feature>
<feature type="disulfide bond" evidence="3">
    <location>
        <begin position="551"/>
        <end position="599"/>
    </location>
</feature>
<feature type="disulfide bond" evidence="3">
    <location>
        <begin position="561"/>
        <end position="587"/>
    </location>
</feature>
<feature type="disulfide bond" evidence="3">
    <location>
        <begin position="607"/>
        <end position="678"/>
    </location>
</feature>
<feature type="disulfide bond" evidence="3">
    <location>
        <begin position="625"/>
        <end position="677"/>
    </location>
</feature>
<feature type="disulfide bond" evidence="3">
    <location>
        <begin position="634"/>
        <end position="653"/>
    </location>
</feature>
<accession>A8T677</accession>
<gene>
    <name type="primary">PCSK9</name>
</gene>
<reference key="1">
    <citation type="journal article" date="2007" name="PLoS ONE">
        <title>Evidence for positive selection in the C-terminal domain of the cholesterol metabolism gene PCSK9 based on phylogenetic analysis in 14 primate species.</title>
        <authorList>
            <person name="Ding K."/>
            <person name="McDonough S.J."/>
            <person name="Kullo I.J."/>
        </authorList>
    </citation>
    <scope>NUCLEOTIDE SEQUENCE [MRNA]</scope>
</reference>